<protein>
    <recommendedName>
        <fullName evidence="1">Peptide methionine sulfoxide reductase MsrA</fullName>
        <shortName evidence="1">Protein-methionine-S-oxide reductase</shortName>
        <ecNumber evidence="1">1.8.4.11</ecNumber>
    </recommendedName>
    <alternativeName>
        <fullName evidence="1">Peptide-methionine (S)-S-oxide reductase</fullName>
        <shortName evidence="1">Peptide Met(O) reductase</shortName>
    </alternativeName>
</protein>
<feature type="chain" id="PRO_0000138531" description="Peptide methionine sulfoxide reductase MsrA">
    <location>
        <begin position="1"/>
        <end position="218"/>
    </location>
</feature>
<feature type="active site" evidence="1">
    <location>
        <position position="57"/>
    </location>
</feature>
<evidence type="ECO:0000255" key="1">
    <source>
        <dbReference type="HAMAP-Rule" id="MF_01401"/>
    </source>
</evidence>
<sequence>MSFFDSYRKKMQMPSKEEVLPGRVQPIPTAAAHFVSGHPLKGPWPDGMKQVLFGMGCFWGAERLFWQVPGVYVTAVGYAGGITPNPTYEETCTGLTGHAEVVLVVYDPKVVTLNELLALFWEEHDPTQGMRQGNDIGTTYRSVIYTFNAVDRAVAEKSRDAYSQALASRGLGPVTTQIADAPDFYYAEDYHQQYLAKNPDGYCGLRGTGVSCPIPLAH</sequence>
<dbReference type="EC" id="1.8.4.11" evidence="1"/>
<dbReference type="EMBL" id="AE017224">
    <property type="protein sequence ID" value="AAX76386.1"/>
    <property type="molecule type" value="Genomic_DNA"/>
</dbReference>
<dbReference type="RefSeq" id="WP_002965585.1">
    <property type="nucleotide sequence ID" value="NC_006933.1"/>
</dbReference>
<dbReference type="SMR" id="Q576P8"/>
<dbReference type="EnsemblBacteria" id="AAX76386">
    <property type="protein sequence ID" value="AAX76386"/>
    <property type="gene ID" value="BruAb2_1009"/>
</dbReference>
<dbReference type="GeneID" id="97534887"/>
<dbReference type="KEGG" id="bmb:BruAb2_1009"/>
<dbReference type="HOGENOM" id="CLU_031040_10_3_5"/>
<dbReference type="Proteomes" id="UP000000540">
    <property type="component" value="Chromosome II"/>
</dbReference>
<dbReference type="GO" id="GO:0005737">
    <property type="term" value="C:cytoplasm"/>
    <property type="evidence" value="ECO:0007669"/>
    <property type="project" value="TreeGrafter"/>
</dbReference>
<dbReference type="GO" id="GO:0036456">
    <property type="term" value="F:L-methionine-(S)-S-oxide reductase activity"/>
    <property type="evidence" value="ECO:0007669"/>
    <property type="project" value="TreeGrafter"/>
</dbReference>
<dbReference type="GO" id="GO:0008113">
    <property type="term" value="F:peptide-methionine (S)-S-oxide reductase activity"/>
    <property type="evidence" value="ECO:0007669"/>
    <property type="project" value="UniProtKB-UniRule"/>
</dbReference>
<dbReference type="GO" id="GO:0034599">
    <property type="term" value="P:cellular response to oxidative stress"/>
    <property type="evidence" value="ECO:0007669"/>
    <property type="project" value="TreeGrafter"/>
</dbReference>
<dbReference type="GO" id="GO:0036211">
    <property type="term" value="P:protein modification process"/>
    <property type="evidence" value="ECO:0007669"/>
    <property type="project" value="UniProtKB-UniRule"/>
</dbReference>
<dbReference type="FunFam" id="3.30.1060.10:FF:000001">
    <property type="entry name" value="Peptide methionine sulfoxide reductase MsrA"/>
    <property type="match status" value="1"/>
</dbReference>
<dbReference type="Gene3D" id="3.30.1060.10">
    <property type="entry name" value="Peptide methionine sulphoxide reductase MsrA"/>
    <property type="match status" value="1"/>
</dbReference>
<dbReference type="HAMAP" id="MF_01401">
    <property type="entry name" value="MsrA"/>
    <property type="match status" value="1"/>
</dbReference>
<dbReference type="InterPro" id="IPR002569">
    <property type="entry name" value="Met_Sox_Rdtase_MsrA_dom"/>
</dbReference>
<dbReference type="InterPro" id="IPR036509">
    <property type="entry name" value="Met_Sox_Rdtase_MsrA_sf"/>
</dbReference>
<dbReference type="InterPro" id="IPR050162">
    <property type="entry name" value="MsrA_MetSO_reductase"/>
</dbReference>
<dbReference type="NCBIfam" id="TIGR00401">
    <property type="entry name" value="msrA"/>
    <property type="match status" value="1"/>
</dbReference>
<dbReference type="PANTHER" id="PTHR42799">
    <property type="entry name" value="MITOCHONDRIAL PEPTIDE METHIONINE SULFOXIDE REDUCTASE"/>
    <property type="match status" value="1"/>
</dbReference>
<dbReference type="PANTHER" id="PTHR42799:SF2">
    <property type="entry name" value="MITOCHONDRIAL PEPTIDE METHIONINE SULFOXIDE REDUCTASE"/>
    <property type="match status" value="1"/>
</dbReference>
<dbReference type="Pfam" id="PF01625">
    <property type="entry name" value="PMSR"/>
    <property type="match status" value="1"/>
</dbReference>
<dbReference type="SUPFAM" id="SSF55068">
    <property type="entry name" value="Peptide methionine sulfoxide reductase"/>
    <property type="match status" value="1"/>
</dbReference>
<keyword id="KW-0560">Oxidoreductase</keyword>
<proteinExistence type="inferred from homology"/>
<comment type="function">
    <text evidence="1">Has an important function as a repair enzyme for proteins that have been inactivated by oxidation. Catalyzes the reversible oxidation-reduction of methionine sulfoxide in proteins to methionine.</text>
</comment>
<comment type="catalytic activity">
    <reaction evidence="1">
        <text>L-methionyl-[protein] + [thioredoxin]-disulfide + H2O = L-methionyl-(S)-S-oxide-[protein] + [thioredoxin]-dithiol</text>
        <dbReference type="Rhea" id="RHEA:14217"/>
        <dbReference type="Rhea" id="RHEA-COMP:10698"/>
        <dbReference type="Rhea" id="RHEA-COMP:10700"/>
        <dbReference type="Rhea" id="RHEA-COMP:12313"/>
        <dbReference type="Rhea" id="RHEA-COMP:12315"/>
        <dbReference type="ChEBI" id="CHEBI:15377"/>
        <dbReference type="ChEBI" id="CHEBI:16044"/>
        <dbReference type="ChEBI" id="CHEBI:29950"/>
        <dbReference type="ChEBI" id="CHEBI:44120"/>
        <dbReference type="ChEBI" id="CHEBI:50058"/>
        <dbReference type="EC" id="1.8.4.11"/>
    </reaction>
</comment>
<comment type="catalytic activity">
    <reaction evidence="1">
        <text>[thioredoxin]-disulfide + L-methionine + H2O = L-methionine (S)-S-oxide + [thioredoxin]-dithiol</text>
        <dbReference type="Rhea" id="RHEA:19993"/>
        <dbReference type="Rhea" id="RHEA-COMP:10698"/>
        <dbReference type="Rhea" id="RHEA-COMP:10700"/>
        <dbReference type="ChEBI" id="CHEBI:15377"/>
        <dbReference type="ChEBI" id="CHEBI:29950"/>
        <dbReference type="ChEBI" id="CHEBI:50058"/>
        <dbReference type="ChEBI" id="CHEBI:57844"/>
        <dbReference type="ChEBI" id="CHEBI:58772"/>
        <dbReference type="EC" id="1.8.4.11"/>
    </reaction>
</comment>
<comment type="similarity">
    <text evidence="1">Belongs to the MsrA Met sulfoxide reductase family.</text>
</comment>
<accession>Q576P8</accession>
<name>MSRA_BRUAB</name>
<organism>
    <name type="scientific">Brucella abortus biovar 1 (strain 9-941)</name>
    <dbReference type="NCBI Taxonomy" id="262698"/>
    <lineage>
        <taxon>Bacteria</taxon>
        <taxon>Pseudomonadati</taxon>
        <taxon>Pseudomonadota</taxon>
        <taxon>Alphaproteobacteria</taxon>
        <taxon>Hyphomicrobiales</taxon>
        <taxon>Brucellaceae</taxon>
        <taxon>Brucella/Ochrobactrum group</taxon>
        <taxon>Brucella</taxon>
    </lineage>
</organism>
<gene>
    <name evidence="1" type="primary">msrA</name>
    <name type="ordered locus">BruAb2_1009</name>
</gene>
<reference key="1">
    <citation type="journal article" date="2005" name="J. Bacteriol.">
        <title>Completion of the genome sequence of Brucella abortus and comparison to the highly similar genomes of Brucella melitensis and Brucella suis.</title>
        <authorList>
            <person name="Halling S.M."/>
            <person name="Peterson-Burch B.D."/>
            <person name="Bricker B.J."/>
            <person name="Zuerner R.L."/>
            <person name="Qing Z."/>
            <person name="Li L.-L."/>
            <person name="Kapur V."/>
            <person name="Alt D.P."/>
            <person name="Olsen S.C."/>
        </authorList>
    </citation>
    <scope>NUCLEOTIDE SEQUENCE [LARGE SCALE GENOMIC DNA]</scope>
    <source>
        <strain>9-941</strain>
    </source>
</reference>